<keyword id="KW-0966">Cell projection</keyword>
<keyword id="KW-0969">Cilium</keyword>
<keyword id="KW-0970">Cilium biogenesis/degradation</keyword>
<keyword id="KW-0175">Coiled coil</keyword>
<keyword id="KW-1185">Reference proteome</keyword>
<keyword id="KW-0677">Repeat</keyword>
<keyword id="KW-0802">TPR repeat</keyword>
<protein>
    <recommendedName>
        <fullName>Intraflagellar transport protein 70A1</fullName>
    </recommendedName>
    <alternativeName>
        <fullName>Tetratricopeptide repeat protein 30A1</fullName>
        <shortName>TPR repeat protein 30A1</shortName>
    </alternativeName>
</protein>
<feature type="chain" id="PRO_0000333202" description="Intraflagellar transport protein 70A1">
    <location>
        <begin position="1"/>
        <end position="664"/>
    </location>
</feature>
<feature type="repeat" description="TPR 1">
    <location>
        <begin position="11"/>
        <end position="44"/>
    </location>
</feature>
<feature type="repeat" description="TPR 2">
    <location>
        <begin position="45"/>
        <end position="78"/>
    </location>
</feature>
<feature type="repeat" description="TPR 3">
    <location>
        <begin position="153"/>
        <end position="186"/>
    </location>
</feature>
<feature type="repeat" description="TPR 4">
    <location>
        <begin position="188"/>
        <end position="220"/>
    </location>
</feature>
<feature type="repeat" description="TPR 5">
    <location>
        <begin position="393"/>
        <end position="423"/>
    </location>
</feature>
<feature type="repeat" description="TPR 6">
    <location>
        <begin position="424"/>
        <end position="456"/>
    </location>
</feature>
<feature type="repeat" description="TPR 7">
    <location>
        <begin position="458"/>
        <end position="491"/>
    </location>
</feature>
<feature type="repeat" description="TPR 8">
    <location>
        <begin position="543"/>
        <end position="576"/>
    </location>
</feature>
<feature type="coiled-coil region" evidence="2">
    <location>
        <begin position="507"/>
        <end position="534"/>
    </location>
</feature>
<feature type="sequence conflict" description="In Ref. 1; BAC26502." evidence="4" ref="1">
    <original>A</original>
    <variation>G</variation>
    <location>
        <position position="2"/>
    </location>
</feature>
<feature type="sequence conflict" description="In Ref. 1; BAC26502." evidence="4" ref="1">
    <original>F</original>
    <variation>L</variation>
    <location>
        <position position="561"/>
    </location>
</feature>
<dbReference type="EMBL" id="AK029535">
    <property type="protein sequence ID" value="BAC26502.1"/>
    <property type="molecule type" value="mRNA"/>
</dbReference>
<dbReference type="EMBL" id="AK045096">
    <property type="protein sequence ID" value="BAC32220.1"/>
    <property type="molecule type" value="mRNA"/>
</dbReference>
<dbReference type="EMBL" id="AL772341">
    <property type="status" value="NOT_ANNOTATED_CDS"/>
    <property type="molecule type" value="Genomic_DNA"/>
</dbReference>
<dbReference type="EMBL" id="BC004773">
    <property type="protein sequence ID" value="AAH04773.1"/>
    <property type="molecule type" value="mRNA"/>
</dbReference>
<dbReference type="CCDS" id="CCDS16154.1"/>
<dbReference type="RefSeq" id="NP_084464.3">
    <property type="nucleotide sequence ID" value="NM_030188.3"/>
</dbReference>
<dbReference type="SMR" id="Q99J38"/>
<dbReference type="FunCoup" id="Q99J38">
    <property type="interactions" value="197"/>
</dbReference>
<dbReference type="STRING" id="10090.ENSMUSP00000097574"/>
<dbReference type="iPTMnet" id="Q99J38"/>
<dbReference type="PhosphoSitePlus" id="Q99J38"/>
<dbReference type="SwissPalm" id="Q99J38"/>
<dbReference type="jPOST" id="Q99J38"/>
<dbReference type="PaxDb" id="10090-ENSMUSP00000097574"/>
<dbReference type="ProteomicsDB" id="254638"/>
<dbReference type="Pumba" id="Q99J38"/>
<dbReference type="DNASU" id="78802"/>
<dbReference type="Ensembl" id="ENSMUST00000099994.5">
    <property type="protein sequence ID" value="ENSMUSP00000097574.4"/>
    <property type="gene ID" value="ENSMUSG00000075271.5"/>
</dbReference>
<dbReference type="GeneID" id="78802"/>
<dbReference type="KEGG" id="mmu:78802"/>
<dbReference type="UCSC" id="uc008kew.3">
    <property type="organism name" value="mouse"/>
</dbReference>
<dbReference type="AGR" id="MGI:1926052"/>
<dbReference type="CTD" id="78802"/>
<dbReference type="MGI" id="MGI:1926052">
    <property type="gene designation" value="Ift70a1"/>
</dbReference>
<dbReference type="VEuPathDB" id="HostDB:ENSMUSG00000075271"/>
<dbReference type="eggNOG" id="KOG4340">
    <property type="taxonomic scope" value="Eukaryota"/>
</dbReference>
<dbReference type="GeneTree" id="ENSGT00390000010116"/>
<dbReference type="HOGENOM" id="CLU_023760_0_0_1"/>
<dbReference type="InParanoid" id="Q99J38"/>
<dbReference type="OMA" id="IAVEIQI"/>
<dbReference type="OrthoDB" id="10249577at2759"/>
<dbReference type="PhylomeDB" id="Q99J38"/>
<dbReference type="TreeFam" id="TF314592"/>
<dbReference type="Reactome" id="R-MMU-5620924">
    <property type="pathway name" value="Intraflagellar transport"/>
</dbReference>
<dbReference type="BioGRID-ORCS" id="78802">
    <property type="hits" value="2 hits in 76 CRISPR screens"/>
</dbReference>
<dbReference type="ChiTaRS" id="Ttc30a1">
    <property type="organism name" value="mouse"/>
</dbReference>
<dbReference type="PRO" id="PR:Q99J38"/>
<dbReference type="Proteomes" id="UP000000589">
    <property type="component" value="Chromosome 2"/>
</dbReference>
<dbReference type="RNAct" id="Q99J38">
    <property type="molecule type" value="protein"/>
</dbReference>
<dbReference type="Bgee" id="ENSMUSG00000075271">
    <property type="expression patterns" value="Expressed in spermatocyte and 216 other cell types or tissues"/>
</dbReference>
<dbReference type="GO" id="GO:0005813">
    <property type="term" value="C:centrosome"/>
    <property type="evidence" value="ECO:0000314"/>
    <property type="project" value="MGI"/>
</dbReference>
<dbReference type="GO" id="GO:0005929">
    <property type="term" value="C:cilium"/>
    <property type="evidence" value="ECO:0000314"/>
    <property type="project" value="MGI"/>
</dbReference>
<dbReference type="GO" id="GO:0030992">
    <property type="term" value="C:intraciliary transport particle B"/>
    <property type="evidence" value="ECO:0000314"/>
    <property type="project" value="MGI"/>
</dbReference>
<dbReference type="GO" id="GO:0120170">
    <property type="term" value="F:intraciliary transport particle B binding"/>
    <property type="evidence" value="ECO:0000314"/>
    <property type="project" value="MGI"/>
</dbReference>
<dbReference type="GO" id="GO:0035720">
    <property type="term" value="P:intraciliary anterograde transport"/>
    <property type="evidence" value="ECO:0000305"/>
    <property type="project" value="MGI"/>
</dbReference>
<dbReference type="FunFam" id="1.25.40.10:FF:000226">
    <property type="entry name" value="Tetratricopeptide repeat protein 30A"/>
    <property type="match status" value="1"/>
</dbReference>
<dbReference type="FunFam" id="1.25.40.10:FF:000211">
    <property type="entry name" value="tetratricopeptide repeat protein 30B"/>
    <property type="match status" value="1"/>
</dbReference>
<dbReference type="Gene3D" id="1.25.40.10">
    <property type="entry name" value="Tetratricopeptide repeat domain"/>
    <property type="match status" value="2"/>
</dbReference>
<dbReference type="InterPro" id="IPR011990">
    <property type="entry name" value="TPR-like_helical_dom_sf"/>
</dbReference>
<dbReference type="InterPro" id="IPR019734">
    <property type="entry name" value="TPR_rpt"/>
</dbReference>
<dbReference type="InterPro" id="IPR039941">
    <property type="entry name" value="TT30"/>
</dbReference>
<dbReference type="PANTHER" id="PTHR20931:SF8">
    <property type="entry name" value="INTRAFLAGELLAR TRANSPORT PROTEIN 70A1"/>
    <property type="match status" value="1"/>
</dbReference>
<dbReference type="PANTHER" id="PTHR20931">
    <property type="entry name" value="TETRATRICOPEPTIDE REPEAT PROTEIN 30"/>
    <property type="match status" value="1"/>
</dbReference>
<dbReference type="SMART" id="SM00028">
    <property type="entry name" value="TPR"/>
    <property type="match status" value="4"/>
</dbReference>
<dbReference type="SUPFAM" id="SSF48452">
    <property type="entry name" value="TPR-like"/>
    <property type="match status" value="3"/>
</dbReference>
<dbReference type="PROSITE" id="PS50293">
    <property type="entry name" value="TPR_REGION"/>
    <property type="match status" value="3"/>
</dbReference>
<accession>Q99J38</accession>
<accession>Q8C0X1</accession>
<sequence>MAWQSSSKVPDGEFTAVVYRLIRDSRYSEAVQLLSAELQRSSRSRAGLSLLAYCYYRLQEFELAAECYEQLSQMHPELEQYRLYQAQALYKACLYPEATRVTFLLDNPAYQTRVLRLQAAIKYSEGDLPGARSLVEQLLSGEAGEDSGGENDPDGLVNMGCLLYKEGHYEAACSKFLAALQASGYQPDLSYNLALAYYSSRQYAPALKHIADIIERGIRQHPELGVGMTTEGIDVRSVGNTVVLHQTALIEAFNLKAAIEYQLRNFEVAQETLTDMPPRAEEELDPVTLHNQALMNMDAKPTEGFEKLQFLLQQNPFPPETFGNLLLLYCKYEYFDLAADVLAENAHLTYKFLTPYLYDFLDAMITCQTAPEEAFIKLDGLAGMLTEQLRRLTKQVQEARHNRDDEIIKKAMNEYDETLEKYIPVLMAQAKIYWNLENYPMVEKIFRKSVEFCNDHDVWKLNVAHVLFMQENKYKEAIGFYEPIVKKNYDNILSVSAIVLANLCVSYIMTSQNEEAEELMRKIEKEEEQLSYGDPDKKIYHLCIVNLVIGTLYCAKGNYDFGISRVIKSLEPYHKKLGTDTWYYAKRCFLSLLENMSKHMIVLCDGVVQECVQFLEYCELYGRNIPAVLEQPLEEERIHTGKNTVTYESRLLKALIYEVIGWNM</sequence>
<evidence type="ECO:0000250" key="1"/>
<evidence type="ECO:0000255" key="2"/>
<evidence type="ECO:0000269" key="3">
    <source>
    </source>
</evidence>
<evidence type="ECO:0000305" key="4"/>
<reference key="1">
    <citation type="journal article" date="2005" name="Science">
        <title>The transcriptional landscape of the mammalian genome.</title>
        <authorList>
            <person name="Carninci P."/>
            <person name="Kasukawa T."/>
            <person name="Katayama S."/>
            <person name="Gough J."/>
            <person name="Frith M.C."/>
            <person name="Maeda N."/>
            <person name="Oyama R."/>
            <person name="Ravasi T."/>
            <person name="Lenhard B."/>
            <person name="Wells C."/>
            <person name="Kodzius R."/>
            <person name="Shimokawa K."/>
            <person name="Bajic V.B."/>
            <person name="Brenner S.E."/>
            <person name="Batalov S."/>
            <person name="Forrest A.R."/>
            <person name="Zavolan M."/>
            <person name="Davis M.J."/>
            <person name="Wilming L.G."/>
            <person name="Aidinis V."/>
            <person name="Allen J.E."/>
            <person name="Ambesi-Impiombato A."/>
            <person name="Apweiler R."/>
            <person name="Aturaliya R.N."/>
            <person name="Bailey T.L."/>
            <person name="Bansal M."/>
            <person name="Baxter L."/>
            <person name="Beisel K.W."/>
            <person name="Bersano T."/>
            <person name="Bono H."/>
            <person name="Chalk A.M."/>
            <person name="Chiu K.P."/>
            <person name="Choudhary V."/>
            <person name="Christoffels A."/>
            <person name="Clutterbuck D.R."/>
            <person name="Crowe M.L."/>
            <person name="Dalla E."/>
            <person name="Dalrymple B.P."/>
            <person name="de Bono B."/>
            <person name="Della Gatta G."/>
            <person name="di Bernardo D."/>
            <person name="Down T."/>
            <person name="Engstrom P."/>
            <person name="Fagiolini M."/>
            <person name="Faulkner G."/>
            <person name="Fletcher C.F."/>
            <person name="Fukushima T."/>
            <person name="Furuno M."/>
            <person name="Futaki S."/>
            <person name="Gariboldi M."/>
            <person name="Georgii-Hemming P."/>
            <person name="Gingeras T.R."/>
            <person name="Gojobori T."/>
            <person name="Green R.E."/>
            <person name="Gustincich S."/>
            <person name="Harbers M."/>
            <person name="Hayashi Y."/>
            <person name="Hensch T.K."/>
            <person name="Hirokawa N."/>
            <person name="Hill D."/>
            <person name="Huminiecki L."/>
            <person name="Iacono M."/>
            <person name="Ikeo K."/>
            <person name="Iwama A."/>
            <person name="Ishikawa T."/>
            <person name="Jakt M."/>
            <person name="Kanapin A."/>
            <person name="Katoh M."/>
            <person name="Kawasawa Y."/>
            <person name="Kelso J."/>
            <person name="Kitamura H."/>
            <person name="Kitano H."/>
            <person name="Kollias G."/>
            <person name="Krishnan S.P."/>
            <person name="Kruger A."/>
            <person name="Kummerfeld S.K."/>
            <person name="Kurochkin I.V."/>
            <person name="Lareau L.F."/>
            <person name="Lazarevic D."/>
            <person name="Lipovich L."/>
            <person name="Liu J."/>
            <person name="Liuni S."/>
            <person name="McWilliam S."/>
            <person name="Madan Babu M."/>
            <person name="Madera M."/>
            <person name="Marchionni L."/>
            <person name="Matsuda H."/>
            <person name="Matsuzawa S."/>
            <person name="Miki H."/>
            <person name="Mignone F."/>
            <person name="Miyake S."/>
            <person name="Morris K."/>
            <person name="Mottagui-Tabar S."/>
            <person name="Mulder N."/>
            <person name="Nakano N."/>
            <person name="Nakauchi H."/>
            <person name="Ng P."/>
            <person name="Nilsson R."/>
            <person name="Nishiguchi S."/>
            <person name="Nishikawa S."/>
            <person name="Nori F."/>
            <person name="Ohara O."/>
            <person name="Okazaki Y."/>
            <person name="Orlando V."/>
            <person name="Pang K.C."/>
            <person name="Pavan W.J."/>
            <person name="Pavesi G."/>
            <person name="Pesole G."/>
            <person name="Petrovsky N."/>
            <person name="Piazza S."/>
            <person name="Reed J."/>
            <person name="Reid J.F."/>
            <person name="Ring B.Z."/>
            <person name="Ringwald M."/>
            <person name="Rost B."/>
            <person name="Ruan Y."/>
            <person name="Salzberg S.L."/>
            <person name="Sandelin A."/>
            <person name="Schneider C."/>
            <person name="Schoenbach C."/>
            <person name="Sekiguchi K."/>
            <person name="Semple C.A."/>
            <person name="Seno S."/>
            <person name="Sessa L."/>
            <person name="Sheng Y."/>
            <person name="Shibata Y."/>
            <person name="Shimada H."/>
            <person name="Shimada K."/>
            <person name="Silva D."/>
            <person name="Sinclair B."/>
            <person name="Sperling S."/>
            <person name="Stupka E."/>
            <person name="Sugiura K."/>
            <person name="Sultana R."/>
            <person name="Takenaka Y."/>
            <person name="Taki K."/>
            <person name="Tammoja K."/>
            <person name="Tan S.L."/>
            <person name="Tang S."/>
            <person name="Taylor M.S."/>
            <person name="Tegner J."/>
            <person name="Teichmann S.A."/>
            <person name="Ueda H.R."/>
            <person name="van Nimwegen E."/>
            <person name="Verardo R."/>
            <person name="Wei C.L."/>
            <person name="Yagi K."/>
            <person name="Yamanishi H."/>
            <person name="Zabarovsky E."/>
            <person name="Zhu S."/>
            <person name="Zimmer A."/>
            <person name="Hide W."/>
            <person name="Bult C."/>
            <person name="Grimmond S.M."/>
            <person name="Teasdale R.D."/>
            <person name="Liu E.T."/>
            <person name="Brusic V."/>
            <person name="Quackenbush J."/>
            <person name="Wahlestedt C."/>
            <person name="Mattick J.S."/>
            <person name="Hume D.A."/>
            <person name="Kai C."/>
            <person name="Sasaki D."/>
            <person name="Tomaru Y."/>
            <person name="Fukuda S."/>
            <person name="Kanamori-Katayama M."/>
            <person name="Suzuki M."/>
            <person name="Aoki J."/>
            <person name="Arakawa T."/>
            <person name="Iida J."/>
            <person name="Imamura K."/>
            <person name="Itoh M."/>
            <person name="Kato T."/>
            <person name="Kawaji H."/>
            <person name="Kawagashira N."/>
            <person name="Kawashima T."/>
            <person name="Kojima M."/>
            <person name="Kondo S."/>
            <person name="Konno H."/>
            <person name="Nakano K."/>
            <person name="Ninomiya N."/>
            <person name="Nishio T."/>
            <person name="Okada M."/>
            <person name="Plessy C."/>
            <person name="Shibata K."/>
            <person name="Shiraki T."/>
            <person name="Suzuki S."/>
            <person name="Tagami M."/>
            <person name="Waki K."/>
            <person name="Watahiki A."/>
            <person name="Okamura-Oho Y."/>
            <person name="Suzuki H."/>
            <person name="Kawai J."/>
            <person name="Hayashizaki Y."/>
        </authorList>
    </citation>
    <scope>NUCLEOTIDE SEQUENCE [LARGE SCALE MRNA]</scope>
    <source>
        <strain>C57BL/6J</strain>
        <tissue>Embryo</tissue>
        <tissue>Testis</tissue>
    </source>
</reference>
<reference key="2">
    <citation type="journal article" date="2009" name="PLoS Biol.">
        <title>Lineage-specific biology revealed by a finished genome assembly of the mouse.</title>
        <authorList>
            <person name="Church D.M."/>
            <person name="Goodstadt L."/>
            <person name="Hillier L.W."/>
            <person name="Zody M.C."/>
            <person name="Goldstein S."/>
            <person name="She X."/>
            <person name="Bult C.J."/>
            <person name="Agarwala R."/>
            <person name="Cherry J.L."/>
            <person name="DiCuccio M."/>
            <person name="Hlavina W."/>
            <person name="Kapustin Y."/>
            <person name="Meric P."/>
            <person name="Maglott D."/>
            <person name="Birtle Z."/>
            <person name="Marques A.C."/>
            <person name="Graves T."/>
            <person name="Zhou S."/>
            <person name="Teague B."/>
            <person name="Potamousis K."/>
            <person name="Churas C."/>
            <person name="Place M."/>
            <person name="Herschleb J."/>
            <person name="Runnheim R."/>
            <person name="Forrest D."/>
            <person name="Amos-Landgraf J."/>
            <person name="Schwartz D.C."/>
            <person name="Cheng Z."/>
            <person name="Lindblad-Toh K."/>
            <person name="Eichler E.E."/>
            <person name="Ponting C.P."/>
        </authorList>
    </citation>
    <scope>NUCLEOTIDE SEQUENCE [LARGE SCALE GENOMIC DNA]</scope>
    <source>
        <strain>C57BL/6J</strain>
    </source>
</reference>
<reference key="3">
    <citation type="journal article" date="2004" name="Genome Res.">
        <title>The status, quality, and expansion of the NIH full-length cDNA project: the Mammalian Gene Collection (MGC).</title>
        <authorList>
            <consortium name="The MGC Project Team"/>
        </authorList>
    </citation>
    <scope>NUCLEOTIDE SEQUENCE [LARGE SCALE MRNA]</scope>
    <source>
        <strain>NMRI</strain>
        <tissue>Mammary tumor</tissue>
    </source>
</reference>
<reference key="4">
    <citation type="journal article" date="2010" name="Cell">
        <title>A tissue-specific atlas of mouse protein phosphorylation and expression.</title>
        <authorList>
            <person name="Huttlin E.L."/>
            <person name="Jedrychowski M.P."/>
            <person name="Elias J.E."/>
            <person name="Goswami T."/>
            <person name="Rad R."/>
            <person name="Beausoleil S.A."/>
            <person name="Villen J."/>
            <person name="Haas W."/>
            <person name="Sowa M.E."/>
            <person name="Gygi S.P."/>
        </authorList>
    </citation>
    <scope>IDENTIFICATION BY MASS SPECTROMETRY [LARGE SCALE ANALYSIS]</scope>
    <source>
        <tissue>Testis</tissue>
    </source>
</reference>
<reference key="5">
    <citation type="journal article" date="2013" name="Exp. Cell Res.">
        <title>Interaction of mouse TTC30/DYF-1 with multiple intraflagellar transport complex B proteins and KIF17.</title>
        <authorList>
            <person name="Howard P.W."/>
            <person name="Jue S.F."/>
            <person name="Maurer R.A."/>
        </authorList>
    </citation>
    <scope>INTERACTION WITH IFT52</scope>
</reference>
<name>I70A1_MOUSE</name>
<proteinExistence type="evidence at protein level"/>
<comment type="function">
    <text evidence="1">Required for polyglutamylation of axonemal tubulin. Plays a role in anterograde intraflagellar transport (IFT), the process by which cilia precursors are transported from the base of the cilium to the site of their incorporation at the tip.</text>
</comment>
<comment type="subunit">
    <text evidence="3">Interacts wit the IFT B complex component IFT52.</text>
</comment>
<comment type="subcellular location">
    <subcellularLocation>
        <location evidence="1">Cell projection</location>
        <location evidence="1">Cilium</location>
    </subcellularLocation>
</comment>
<comment type="similarity">
    <text evidence="4">Belongs to the TTC30/dfy-1/fleer family.</text>
</comment>
<gene>
    <name type="primary">Ift70a1</name>
    <name type="synonym">Ttc30a1</name>
</gene>
<organism>
    <name type="scientific">Mus musculus</name>
    <name type="common">Mouse</name>
    <dbReference type="NCBI Taxonomy" id="10090"/>
    <lineage>
        <taxon>Eukaryota</taxon>
        <taxon>Metazoa</taxon>
        <taxon>Chordata</taxon>
        <taxon>Craniata</taxon>
        <taxon>Vertebrata</taxon>
        <taxon>Euteleostomi</taxon>
        <taxon>Mammalia</taxon>
        <taxon>Eutheria</taxon>
        <taxon>Euarchontoglires</taxon>
        <taxon>Glires</taxon>
        <taxon>Rodentia</taxon>
        <taxon>Myomorpha</taxon>
        <taxon>Muroidea</taxon>
        <taxon>Muridae</taxon>
        <taxon>Murinae</taxon>
        <taxon>Mus</taxon>
        <taxon>Mus</taxon>
    </lineage>
</organism>